<evidence type="ECO:0000255" key="1"/>
<evidence type="ECO:0000255" key="2">
    <source>
        <dbReference type="PROSITE-ProRule" id="PRU00114"/>
    </source>
</evidence>
<evidence type="ECO:0000305" key="3"/>
<evidence type="ECO:0000312" key="4">
    <source>
        <dbReference type="HGNC" id="HGNC:32063"/>
    </source>
</evidence>
<comment type="interaction">
    <interactant intactId="EBI-2511675">
        <id>P0DPA2</id>
    </interactant>
    <interactant intactId="EBI-448378">
        <id>Q9NWZ3</id>
        <label>IRAK4</label>
    </interactant>
    <organismsDiffer>false</organismsDiffer>
    <experiments>2</experiments>
</comment>
<comment type="subcellular location">
    <subcellularLocation>
        <location evidence="3">Membrane</location>
        <topology evidence="3">Single-pass type I membrane protein</topology>
    </subcellularLocation>
</comment>
<reference key="1">
    <citation type="journal article" date="2006" name="Nature">
        <title>The DNA sequence and biological annotation of human chromosome 1.</title>
        <authorList>
            <person name="Gregory S.G."/>
            <person name="Barlow K.F."/>
            <person name="McLay K.E."/>
            <person name="Kaul R."/>
            <person name="Swarbreck D."/>
            <person name="Dunham A."/>
            <person name="Scott C.E."/>
            <person name="Howe K.L."/>
            <person name="Woodfine K."/>
            <person name="Spencer C.C.A."/>
            <person name="Jones M.C."/>
            <person name="Gillson C."/>
            <person name="Searle S."/>
            <person name="Zhou Y."/>
            <person name="Kokocinski F."/>
            <person name="McDonald L."/>
            <person name="Evans R."/>
            <person name="Phillips K."/>
            <person name="Atkinson A."/>
            <person name="Cooper R."/>
            <person name="Jones C."/>
            <person name="Hall R.E."/>
            <person name="Andrews T.D."/>
            <person name="Lloyd C."/>
            <person name="Ainscough R."/>
            <person name="Almeida J.P."/>
            <person name="Ambrose K.D."/>
            <person name="Anderson F."/>
            <person name="Andrew R.W."/>
            <person name="Ashwell R.I.S."/>
            <person name="Aubin K."/>
            <person name="Babbage A.K."/>
            <person name="Bagguley C.L."/>
            <person name="Bailey J."/>
            <person name="Beasley H."/>
            <person name="Bethel G."/>
            <person name="Bird C.P."/>
            <person name="Bray-Allen S."/>
            <person name="Brown J.Y."/>
            <person name="Brown A.J."/>
            <person name="Buckley D."/>
            <person name="Burton J."/>
            <person name="Bye J."/>
            <person name="Carder C."/>
            <person name="Chapman J.C."/>
            <person name="Clark S.Y."/>
            <person name="Clarke G."/>
            <person name="Clee C."/>
            <person name="Cobley V."/>
            <person name="Collier R.E."/>
            <person name="Corby N."/>
            <person name="Coville G.J."/>
            <person name="Davies J."/>
            <person name="Deadman R."/>
            <person name="Dunn M."/>
            <person name="Earthrowl M."/>
            <person name="Ellington A.G."/>
            <person name="Errington H."/>
            <person name="Frankish A."/>
            <person name="Frankland J."/>
            <person name="French L."/>
            <person name="Garner P."/>
            <person name="Garnett J."/>
            <person name="Gay L."/>
            <person name="Ghori M.R.J."/>
            <person name="Gibson R."/>
            <person name="Gilby L.M."/>
            <person name="Gillett W."/>
            <person name="Glithero R.J."/>
            <person name="Grafham D.V."/>
            <person name="Griffiths C."/>
            <person name="Griffiths-Jones S."/>
            <person name="Grocock R."/>
            <person name="Hammond S."/>
            <person name="Harrison E.S.I."/>
            <person name="Hart E."/>
            <person name="Haugen E."/>
            <person name="Heath P.D."/>
            <person name="Holmes S."/>
            <person name="Holt K."/>
            <person name="Howden P.J."/>
            <person name="Hunt A.R."/>
            <person name="Hunt S.E."/>
            <person name="Hunter G."/>
            <person name="Isherwood J."/>
            <person name="James R."/>
            <person name="Johnson C."/>
            <person name="Johnson D."/>
            <person name="Joy A."/>
            <person name="Kay M."/>
            <person name="Kershaw J.K."/>
            <person name="Kibukawa M."/>
            <person name="Kimberley A.M."/>
            <person name="King A."/>
            <person name="Knights A.J."/>
            <person name="Lad H."/>
            <person name="Laird G."/>
            <person name="Lawlor S."/>
            <person name="Leongamornlert D.A."/>
            <person name="Lloyd D.M."/>
            <person name="Loveland J."/>
            <person name="Lovell J."/>
            <person name="Lush M.J."/>
            <person name="Lyne R."/>
            <person name="Martin S."/>
            <person name="Mashreghi-Mohammadi M."/>
            <person name="Matthews L."/>
            <person name="Matthews N.S.W."/>
            <person name="McLaren S."/>
            <person name="Milne S."/>
            <person name="Mistry S."/>
            <person name="Moore M.J.F."/>
            <person name="Nickerson T."/>
            <person name="O'Dell C.N."/>
            <person name="Oliver K."/>
            <person name="Palmeiri A."/>
            <person name="Palmer S.A."/>
            <person name="Parker A."/>
            <person name="Patel D."/>
            <person name="Pearce A.V."/>
            <person name="Peck A.I."/>
            <person name="Pelan S."/>
            <person name="Phelps K."/>
            <person name="Phillimore B.J."/>
            <person name="Plumb R."/>
            <person name="Rajan J."/>
            <person name="Raymond C."/>
            <person name="Rouse G."/>
            <person name="Saenphimmachak C."/>
            <person name="Sehra H.K."/>
            <person name="Sheridan E."/>
            <person name="Shownkeen R."/>
            <person name="Sims S."/>
            <person name="Skuce C.D."/>
            <person name="Smith M."/>
            <person name="Steward C."/>
            <person name="Subramanian S."/>
            <person name="Sycamore N."/>
            <person name="Tracey A."/>
            <person name="Tromans A."/>
            <person name="Van Helmond Z."/>
            <person name="Wall M."/>
            <person name="Wallis J.M."/>
            <person name="White S."/>
            <person name="Whitehead S.L."/>
            <person name="Wilkinson J.E."/>
            <person name="Willey D.L."/>
            <person name="Williams H."/>
            <person name="Wilming L."/>
            <person name="Wray P.W."/>
            <person name="Wu Z."/>
            <person name="Coulson A."/>
            <person name="Vaudin M."/>
            <person name="Sulston J.E."/>
            <person name="Durbin R.M."/>
            <person name="Hubbard T."/>
            <person name="Wooster R."/>
            <person name="Dunham I."/>
            <person name="Carter N.P."/>
            <person name="McVean G."/>
            <person name="Ross M.T."/>
            <person name="Harrow J."/>
            <person name="Olson M.V."/>
            <person name="Beck S."/>
            <person name="Rogers J."/>
            <person name="Bentley D.R."/>
        </authorList>
    </citation>
    <scope>NUCLEOTIDE SEQUENCE [LARGE SCALE GENOMIC DNA]</scope>
</reference>
<reference key="2">
    <citation type="journal article" date="2004" name="Genome Res.">
        <title>The status, quality, and expansion of the NIH full-length cDNA project: the Mammalian Gene Collection (MGC).</title>
        <authorList>
            <consortium name="The MGC Project Team"/>
        </authorList>
    </citation>
    <scope>NUCLEOTIDE SEQUENCE [LARGE SCALE MRNA]</scope>
</reference>
<gene>
    <name evidence="4" type="primary">VSIG8</name>
    <name type="synonym">C1orf204</name>
</gene>
<accession>P0DPA2</accession>
<accession>Q5VU13</accession>
<accession>Q5VU14</accession>
<protein>
    <recommendedName>
        <fullName>V-set and immunoglobulin domain-containing protein 8</fullName>
    </recommendedName>
</protein>
<organism>
    <name type="scientific">Homo sapiens</name>
    <name type="common">Human</name>
    <dbReference type="NCBI Taxonomy" id="9606"/>
    <lineage>
        <taxon>Eukaryota</taxon>
        <taxon>Metazoa</taxon>
        <taxon>Chordata</taxon>
        <taxon>Craniata</taxon>
        <taxon>Vertebrata</taxon>
        <taxon>Euteleostomi</taxon>
        <taxon>Mammalia</taxon>
        <taxon>Eutheria</taxon>
        <taxon>Euarchontoglires</taxon>
        <taxon>Primates</taxon>
        <taxon>Haplorrhini</taxon>
        <taxon>Catarrhini</taxon>
        <taxon>Hominidae</taxon>
        <taxon>Homo</taxon>
    </lineage>
</organism>
<keyword id="KW-1015">Disulfide bond</keyword>
<keyword id="KW-0393">Immunoglobulin domain</keyword>
<keyword id="KW-0472">Membrane</keyword>
<keyword id="KW-1267">Proteomics identification</keyword>
<keyword id="KW-1185">Reference proteome</keyword>
<keyword id="KW-0677">Repeat</keyword>
<keyword id="KW-0732">Signal</keyword>
<keyword id="KW-0812">Transmembrane</keyword>
<keyword id="KW-1133">Transmembrane helix</keyword>
<dbReference type="EMBL" id="AL590560">
    <property type="status" value="NOT_ANNOTATED_CDS"/>
    <property type="molecule type" value="Genomic_DNA"/>
</dbReference>
<dbReference type="EMBL" id="BC132893">
    <property type="protein sequence ID" value="AAI32894.1"/>
    <property type="molecule type" value="mRNA"/>
</dbReference>
<dbReference type="EMBL" id="BC132895">
    <property type="protein sequence ID" value="AAI32896.1"/>
    <property type="molecule type" value="mRNA"/>
</dbReference>
<dbReference type="CCDS" id="CCDS30913.1"/>
<dbReference type="RefSeq" id="NP_001013683.1">
    <property type="nucleotide sequence ID" value="NM_001013661.1"/>
</dbReference>
<dbReference type="SMR" id="P0DPA2"/>
<dbReference type="FunCoup" id="P0DPA2">
    <property type="interactions" value="327"/>
</dbReference>
<dbReference type="IntAct" id="P0DPA2">
    <property type="interactions" value="109"/>
</dbReference>
<dbReference type="STRING" id="9606.ENSP00000357080"/>
<dbReference type="BindingDB" id="P0DPA2"/>
<dbReference type="ChEMBL" id="CHEMBL5169113"/>
<dbReference type="iPTMnet" id="P0DPA2"/>
<dbReference type="PhosphoSitePlus" id="P0DPA2"/>
<dbReference type="BioMuta" id="VSIG8"/>
<dbReference type="MassIVE" id="P0DPA2"/>
<dbReference type="PaxDb" id="9606-ENSP00000357080"/>
<dbReference type="PeptideAtlas" id="P0DPA2"/>
<dbReference type="Pumba" id="P0DPA2"/>
<dbReference type="Antibodypedia" id="34887">
    <property type="antibodies" value="123 antibodies from 15 providers"/>
</dbReference>
<dbReference type="DNASU" id="391123"/>
<dbReference type="Ensembl" id="ENST00000368100.1">
    <property type="protein sequence ID" value="ENSP00000357080.1"/>
    <property type="gene ID" value="ENSG00000243284.1"/>
</dbReference>
<dbReference type="GeneID" id="391123"/>
<dbReference type="KEGG" id="hsa:391123"/>
<dbReference type="MANE-Select" id="ENST00000368100.1">
    <property type="protein sequence ID" value="ENSP00000357080.1"/>
    <property type="RefSeq nucleotide sequence ID" value="NM_001013661.1"/>
    <property type="RefSeq protein sequence ID" value="NP_001013683.1"/>
</dbReference>
<dbReference type="AGR" id="HGNC:32063"/>
<dbReference type="CTD" id="391123"/>
<dbReference type="GeneCards" id="VSIG8"/>
<dbReference type="HGNC" id="HGNC:32063">
    <property type="gene designation" value="VSIG8"/>
</dbReference>
<dbReference type="HPA" id="ENSG00000243284">
    <property type="expression patterns" value="Tissue enhanced (skin)"/>
</dbReference>
<dbReference type="MIM" id="621098">
    <property type="type" value="gene"/>
</dbReference>
<dbReference type="neXtProt" id="NX_P0DPA2"/>
<dbReference type="OpenTargets" id="ENSG00000243284"/>
<dbReference type="VEuPathDB" id="HostDB:ENSG00000243284"/>
<dbReference type="eggNOG" id="ENOG502RXSJ">
    <property type="taxonomic scope" value="Eukaryota"/>
</dbReference>
<dbReference type="GeneTree" id="ENSGT00940000161712"/>
<dbReference type="InParanoid" id="P0DPA2"/>
<dbReference type="OMA" id="PSPIYVK"/>
<dbReference type="OrthoDB" id="10045577at2759"/>
<dbReference type="PAN-GO" id="P0DPA2">
    <property type="GO annotations" value="1 GO annotation based on evolutionary models"/>
</dbReference>
<dbReference type="PathwayCommons" id="P0DPA2"/>
<dbReference type="SignaLink" id="P0DPA2"/>
<dbReference type="Pharos" id="P0DPA2">
    <property type="development level" value="Tdark"/>
</dbReference>
<dbReference type="PRO" id="PR:P0DPA2"/>
<dbReference type="Proteomes" id="UP000005640">
    <property type="component" value="Chromosome 1"/>
</dbReference>
<dbReference type="RNAct" id="P0DPA2">
    <property type="molecule type" value="protein"/>
</dbReference>
<dbReference type="Bgee" id="ENSG00000243284">
    <property type="expression patterns" value="Expressed in skin of leg and 50 other cell types or tissues"/>
</dbReference>
<dbReference type="GO" id="GO:0016020">
    <property type="term" value="C:membrane"/>
    <property type="evidence" value="ECO:0007669"/>
    <property type="project" value="UniProtKB-SubCell"/>
</dbReference>
<dbReference type="GO" id="GO:0003723">
    <property type="term" value="F:RNA binding"/>
    <property type="evidence" value="ECO:0007005"/>
    <property type="project" value="UniProtKB"/>
</dbReference>
<dbReference type="FunFam" id="2.60.40.10:FF:000976">
    <property type="entry name" value="V-set and immunoglobulin domain containing 8"/>
    <property type="match status" value="1"/>
</dbReference>
<dbReference type="FunFam" id="2.60.40.10:FF:001870">
    <property type="entry name" value="V-set and immunoglobulin domain containing 8"/>
    <property type="match status" value="1"/>
</dbReference>
<dbReference type="Gene3D" id="2.60.40.10">
    <property type="entry name" value="Immunoglobulins"/>
    <property type="match status" value="2"/>
</dbReference>
<dbReference type="InterPro" id="IPR007110">
    <property type="entry name" value="Ig-like_dom"/>
</dbReference>
<dbReference type="InterPro" id="IPR036179">
    <property type="entry name" value="Ig-like_dom_sf"/>
</dbReference>
<dbReference type="InterPro" id="IPR013783">
    <property type="entry name" value="Ig-like_fold"/>
</dbReference>
<dbReference type="InterPro" id="IPR003599">
    <property type="entry name" value="Ig_sub"/>
</dbReference>
<dbReference type="InterPro" id="IPR003598">
    <property type="entry name" value="Ig_sub2"/>
</dbReference>
<dbReference type="InterPro" id="IPR013106">
    <property type="entry name" value="Ig_V-set"/>
</dbReference>
<dbReference type="InterPro" id="IPR052871">
    <property type="entry name" value="V-set/Ig_domain"/>
</dbReference>
<dbReference type="PANTHER" id="PTHR45166">
    <property type="entry name" value="V-SET AND IMMUNOGLOBULIN DOMAIN-CONTAINING PROTEIN 8"/>
    <property type="match status" value="1"/>
</dbReference>
<dbReference type="PANTHER" id="PTHR45166:SF1">
    <property type="entry name" value="V-SET AND IMMUNOGLOBULIN DOMAIN-CONTAINING PROTEIN 8"/>
    <property type="match status" value="1"/>
</dbReference>
<dbReference type="Pfam" id="PF13927">
    <property type="entry name" value="Ig_3"/>
    <property type="match status" value="1"/>
</dbReference>
<dbReference type="Pfam" id="PF07686">
    <property type="entry name" value="V-set"/>
    <property type="match status" value="1"/>
</dbReference>
<dbReference type="SMART" id="SM00409">
    <property type="entry name" value="IG"/>
    <property type="match status" value="2"/>
</dbReference>
<dbReference type="SMART" id="SM00408">
    <property type="entry name" value="IGc2"/>
    <property type="match status" value="1"/>
</dbReference>
<dbReference type="SMART" id="SM00406">
    <property type="entry name" value="IGv"/>
    <property type="match status" value="2"/>
</dbReference>
<dbReference type="SUPFAM" id="SSF48726">
    <property type="entry name" value="Immunoglobulin"/>
    <property type="match status" value="2"/>
</dbReference>
<dbReference type="PROSITE" id="PS50835">
    <property type="entry name" value="IG_LIKE"/>
    <property type="match status" value="2"/>
</dbReference>
<sequence>MRVGGAFHLLLVCLSPALLSAVRINGDGQEVLYLAEGDNVRLGCPYVLDPEDYGPNGLDIEWMQVNSDPAHHRENVFLSYQDKRINHGSLPHLQQRVRFAASDPSQYDASINLMNLQVSDTATYECRVKKTTMATRKVIVTVQARPAVPMCWTEGHMTYGNDVVLKCYASGGSQPLSYKWAKISGHHYPYRAGSYTSQHSYHSELSYQESFHSSINQGLNNGDLVLKDISRADDGLYQCTVANNVGYSVCVVEVKVSDSRRIGVIIGIVLGSLLALGCLAVGIWGLVCCCCGGSGAGGARGAFGYGNGGGVGGGACGDLASEIREDAVAPGCKASGRGSRVTHLLGYPTQNVSRSLRRKYAPPPCGGPEDVALAPCTAAAACEAGPSPVYVKVKSAEPADCAEGPVQCKNGLLV</sequence>
<name>VSIG8_HUMAN</name>
<proteinExistence type="evidence at protein level"/>
<feature type="signal peptide" evidence="1">
    <location>
        <begin position="1"/>
        <end position="21"/>
    </location>
</feature>
<feature type="chain" id="PRO_0000313627" description="V-set and immunoglobulin domain-containing protein 8">
    <location>
        <begin position="22"/>
        <end position="414"/>
    </location>
</feature>
<feature type="topological domain" description="Extracellular" evidence="1">
    <location>
        <begin position="22"/>
        <end position="263"/>
    </location>
</feature>
<feature type="transmembrane region" description="Helical" evidence="1">
    <location>
        <begin position="264"/>
        <end position="284"/>
    </location>
</feature>
<feature type="topological domain" description="Cytoplasmic" evidence="1">
    <location>
        <begin position="285"/>
        <end position="414"/>
    </location>
</feature>
<feature type="domain" description="Ig-like V-type 1">
    <location>
        <begin position="22"/>
        <end position="141"/>
    </location>
</feature>
<feature type="domain" description="Ig-like V-type 2">
    <location>
        <begin position="146"/>
        <end position="257"/>
    </location>
</feature>
<feature type="disulfide bond" evidence="2">
    <location>
        <begin position="44"/>
        <end position="126"/>
    </location>
</feature>
<feature type="disulfide bond" evidence="2">
    <location>
        <begin position="167"/>
        <end position="239"/>
    </location>
</feature>